<name>HBS1_YEAST</name>
<accession>P32769</accession>
<accession>D6VXE4</accession>
<reference key="1">
    <citation type="journal article" date="1994" name="Yeast">
        <title>The complete sequence of an 18,002 bp segment of Saccharomyces cerevisiae chromosome XI contains the HBS1, MRP-L20 and PRP16 genes, and six new open reading frames.</title>
        <authorList>
            <person name="Garcia-Cantalejo J.M."/>
            <person name="Baladron V."/>
            <person name="Esteban P.F."/>
            <person name="Santos M.A."/>
            <person name="Bou G."/>
            <person name="Remacha M.A."/>
            <person name="Revuelta J.L."/>
            <person name="Ballesta J.P.G."/>
            <person name="Jimenez A."/>
            <person name="del Rey F."/>
        </authorList>
    </citation>
    <scope>NUCLEOTIDE SEQUENCE [GENOMIC DNA]</scope>
</reference>
<reference key="2">
    <citation type="journal article" date="1994" name="Nature">
        <title>Complete DNA sequence of yeast chromosome XI.</title>
        <authorList>
            <person name="Dujon B."/>
            <person name="Alexandraki D."/>
            <person name="Andre B."/>
            <person name="Ansorge W."/>
            <person name="Baladron V."/>
            <person name="Ballesta J.P.G."/>
            <person name="Banrevi A."/>
            <person name="Bolle P.-A."/>
            <person name="Bolotin-Fukuhara M."/>
            <person name="Bossier P."/>
            <person name="Bou G."/>
            <person name="Boyer J."/>
            <person name="Buitrago M.J."/>
            <person name="Cheret G."/>
            <person name="Colleaux L."/>
            <person name="Daignan-Fornier B."/>
            <person name="del Rey F."/>
            <person name="Dion C."/>
            <person name="Domdey H."/>
            <person name="Duesterhoeft A."/>
            <person name="Duesterhus S."/>
            <person name="Entian K.-D."/>
            <person name="Erfle H."/>
            <person name="Esteban P.F."/>
            <person name="Feldmann H."/>
            <person name="Fernandes L."/>
            <person name="Fobo G.M."/>
            <person name="Fritz C."/>
            <person name="Fukuhara H."/>
            <person name="Gabel C."/>
            <person name="Gaillon L."/>
            <person name="Garcia-Cantalejo J.M."/>
            <person name="Garcia-Ramirez J.J."/>
            <person name="Gent M.E."/>
            <person name="Ghazvini M."/>
            <person name="Goffeau A."/>
            <person name="Gonzalez A."/>
            <person name="Grothues D."/>
            <person name="Guerreiro P."/>
            <person name="Hegemann J.H."/>
            <person name="Hewitt N."/>
            <person name="Hilger F."/>
            <person name="Hollenberg C.P."/>
            <person name="Horaitis O."/>
            <person name="Indge K.J."/>
            <person name="Jacquier A."/>
            <person name="James C.M."/>
            <person name="Jauniaux J.-C."/>
            <person name="Jimenez A."/>
            <person name="Keuchel H."/>
            <person name="Kirchrath L."/>
            <person name="Kleine K."/>
            <person name="Koetter P."/>
            <person name="Legrain P."/>
            <person name="Liebl S."/>
            <person name="Louis E.J."/>
            <person name="Maia e Silva A."/>
            <person name="Marck C."/>
            <person name="Monnier A.-L."/>
            <person name="Moestl D."/>
            <person name="Mueller S."/>
            <person name="Obermaier B."/>
            <person name="Oliver S.G."/>
            <person name="Pallier C."/>
            <person name="Pascolo S."/>
            <person name="Pfeiffer F."/>
            <person name="Philippsen P."/>
            <person name="Planta R.J."/>
            <person name="Pohl F.M."/>
            <person name="Pohl T.M."/>
            <person name="Poehlmann R."/>
            <person name="Portetelle D."/>
            <person name="Purnelle B."/>
            <person name="Puzos V."/>
            <person name="Ramezani Rad M."/>
            <person name="Rasmussen S.W."/>
            <person name="Remacha M.A."/>
            <person name="Revuelta J.L."/>
            <person name="Richard G.-F."/>
            <person name="Rieger M."/>
            <person name="Rodrigues-Pousada C."/>
            <person name="Rose M."/>
            <person name="Rupp T."/>
            <person name="Santos M.A."/>
            <person name="Schwager C."/>
            <person name="Sensen C."/>
            <person name="Skala J."/>
            <person name="Soares H."/>
            <person name="Sor F."/>
            <person name="Stegemann J."/>
            <person name="Tettelin H."/>
            <person name="Thierry A."/>
            <person name="Tzermia M."/>
            <person name="Urrestarazu L.A."/>
            <person name="van Dyck L."/>
            <person name="van Vliet-Reedijk J.C."/>
            <person name="Valens M."/>
            <person name="Vandenbol M."/>
            <person name="Vilela C."/>
            <person name="Vissers S."/>
            <person name="von Wettstein D."/>
            <person name="Voss H."/>
            <person name="Wiemann S."/>
            <person name="Xu G."/>
            <person name="Zimmermann J."/>
            <person name="Haasemann M."/>
            <person name="Becker I."/>
            <person name="Mewes H.-W."/>
        </authorList>
    </citation>
    <scope>NUCLEOTIDE SEQUENCE [LARGE SCALE GENOMIC DNA]</scope>
    <source>
        <strain>ATCC 204508 / S288c</strain>
    </source>
</reference>
<reference key="3">
    <citation type="journal article" date="2014" name="G3 (Bethesda)">
        <title>The reference genome sequence of Saccharomyces cerevisiae: Then and now.</title>
        <authorList>
            <person name="Engel S.R."/>
            <person name="Dietrich F.S."/>
            <person name="Fisk D.G."/>
            <person name="Binkley G."/>
            <person name="Balakrishnan R."/>
            <person name="Costanzo M.C."/>
            <person name="Dwight S.S."/>
            <person name="Hitz B.C."/>
            <person name="Karra K."/>
            <person name="Nash R.S."/>
            <person name="Weng S."/>
            <person name="Wong E.D."/>
            <person name="Lloyd P."/>
            <person name="Skrzypek M.S."/>
            <person name="Miyasato S.R."/>
            <person name="Simison M."/>
            <person name="Cherry J.M."/>
        </authorList>
    </citation>
    <scope>GENOME REANNOTATION</scope>
    <source>
        <strain>ATCC 204508 / S288c</strain>
    </source>
</reference>
<reference key="4">
    <citation type="journal article" date="1992" name="Cell">
        <title>The translation machinery and 70 kd heat shock protein cooperate in protein synthesis.</title>
        <authorList>
            <person name="Nelson R.J."/>
            <person name="Ziegelhoffer T."/>
            <person name="Nicolet C."/>
            <person name="Werner-Washburne M."/>
            <person name="Craig E.A."/>
        </authorList>
    </citation>
    <scope>NUCLEOTIDE SEQUENCE [GENOMIC DNA] OF 92-611</scope>
</reference>
<reference key="5">
    <citation type="journal article" date="2002" name="Mol. Cell. Biol.">
        <title>Novel G-protein complex whose requirement is linked to the translational status of the cell.</title>
        <authorList>
            <person name="Carr-Schmid A."/>
            <person name="Pfund C."/>
            <person name="Craig E.A."/>
            <person name="Kinzy T.G."/>
        </authorList>
    </citation>
    <scope>INTERACTION WITH DOM34</scope>
    <scope>MUTAGENESIS OF VAL-176 AND HIS-255</scope>
</reference>
<reference key="6">
    <citation type="journal article" date="2003" name="Nature">
        <title>Global analysis of protein localization in budding yeast.</title>
        <authorList>
            <person name="Huh W.-K."/>
            <person name="Falvo J.V."/>
            <person name="Gerke L.C."/>
            <person name="Carroll A.S."/>
            <person name="Howson R.W."/>
            <person name="Weissman J.S."/>
            <person name="O'Shea E.K."/>
        </authorList>
    </citation>
    <scope>SUBCELLULAR LOCATION [LARGE SCALE ANALYSIS]</scope>
</reference>
<reference key="7">
    <citation type="journal article" date="2003" name="Nature">
        <title>Global analysis of protein expression in yeast.</title>
        <authorList>
            <person name="Ghaemmaghami S."/>
            <person name="Huh W.-K."/>
            <person name="Bower K."/>
            <person name="Howson R.W."/>
            <person name="Belle A."/>
            <person name="Dephoure N."/>
            <person name="O'Shea E.K."/>
            <person name="Weissman J.S."/>
        </authorList>
    </citation>
    <scope>LEVEL OF PROTEIN EXPRESSION [LARGE SCALE ANALYSIS]</scope>
</reference>
<reference key="8">
    <citation type="journal article" date="2006" name="Nature">
        <title>Endonucleolytic cleavage of eukaryotic mRNAs with stalls in translation elongation.</title>
        <authorList>
            <person name="Doma M.K."/>
            <person name="Parker R."/>
        </authorList>
    </citation>
    <scope>FUNCTION</scope>
</reference>
<reference key="9">
    <citation type="journal article" date="2007" name="J. Proteome Res.">
        <title>Large-scale phosphorylation analysis of alpha-factor-arrested Saccharomyces cerevisiae.</title>
        <authorList>
            <person name="Li X."/>
            <person name="Gerber S.A."/>
            <person name="Rudner A.D."/>
            <person name="Beausoleil S.A."/>
            <person name="Haas W."/>
            <person name="Villen J."/>
            <person name="Elias J.E."/>
            <person name="Gygi S.P."/>
        </authorList>
    </citation>
    <scope>PHOSPHORYLATION [LARGE SCALE ANALYSIS] AT SER-124</scope>
    <scope>IDENTIFICATION BY MASS SPECTROMETRY [LARGE SCALE ANALYSIS]</scope>
    <source>
        <strain>ADR376</strain>
    </source>
</reference>
<reference key="10">
    <citation type="journal article" date="2008" name="Mol. Cell. Proteomics">
        <title>A multidimensional chromatography technology for in-depth phosphoproteome analysis.</title>
        <authorList>
            <person name="Albuquerque C.P."/>
            <person name="Smolka M.B."/>
            <person name="Payne S.H."/>
            <person name="Bafna V."/>
            <person name="Eng J."/>
            <person name="Zhou H."/>
        </authorList>
    </citation>
    <scope>PHOSPHORYLATION [LARGE SCALE ANALYSIS] AT SER-124</scope>
    <scope>IDENTIFICATION BY MASS SPECTROMETRY [LARGE SCALE ANALYSIS]</scope>
</reference>
<reference key="11">
    <citation type="journal article" date="2009" name="Science">
        <title>Global analysis of Cdk1 substrate phosphorylation sites provides insights into evolution.</title>
        <authorList>
            <person name="Holt L.J."/>
            <person name="Tuch B.B."/>
            <person name="Villen J."/>
            <person name="Johnson A.D."/>
            <person name="Gygi S.P."/>
            <person name="Morgan D.O."/>
        </authorList>
    </citation>
    <scope>PHOSPHORYLATION [LARGE SCALE ANALYSIS] AT SER-124</scope>
    <scope>IDENTIFICATION BY MASS SPECTROMETRY [LARGE SCALE ANALYSIS]</scope>
</reference>
<reference key="12">
    <citation type="journal article" date="2010" name="Science">
        <title>Dom34:Hbs1 promotes subunit dissociation and peptidyl-tRNA drop-off to initiate no-go decay.</title>
        <authorList>
            <person name="Shoemaker C.J."/>
            <person name="Eyler D.E."/>
            <person name="Green R."/>
        </authorList>
    </citation>
    <scope>FUNCTION</scope>
    <scope>CATALYTIC ACTIVITY</scope>
    <scope>IDENTIFICATION IN THE DOM34-HBS1 COMPLEX</scope>
</reference>
<reference evidence="16 17" key="13">
    <citation type="journal article" date="2010" name="Nat. Struct. Mol. Biol.">
        <title>Dissection of Dom34-Hbs1 reveals independent functions in two RNA quality control pathways.</title>
        <authorList>
            <person name="van den Elzen A.M."/>
            <person name="Henri J."/>
            <person name="Lazar N."/>
            <person name="Gas M.E."/>
            <person name="Durand D."/>
            <person name="Lacroute F."/>
            <person name="Nicaise M."/>
            <person name="van Tilbeurgh H."/>
            <person name="Seraphin B."/>
            <person name="Graille M."/>
        </authorList>
    </citation>
    <scope>X-RAY CRYSTALLOGRAPHY (2.50 ANGSTROMS) OF 135-611 IN COMPLEX WITH GDP</scope>
    <scope>FUNCTION</scope>
    <scope>IDENTIFICATION IN THE DOM34-HBS1 COMPLEX</scope>
    <scope>MUTAGENESIS OF VAL-176; LYS-180; HIS-255; ARG-517; LEU-520 AND 557-ARG-HIS-558</scope>
</reference>
<reference evidence="15" key="14">
    <citation type="journal article" date="2011" name="Nat. Struct. Mol. Biol.">
        <title>Structure of the no-go mRNA decay complex Dom34-Hbs1 bound to a stalled 80S ribosome.</title>
        <authorList>
            <person name="Becker T."/>
            <person name="Armache J.P."/>
            <person name="Jarasch A."/>
            <person name="Anger A.M."/>
            <person name="Villa E."/>
            <person name="Sieber H."/>
            <person name="Motaal B.A."/>
            <person name="Mielke T."/>
            <person name="Berninghausen O."/>
            <person name="Beckmann R."/>
        </authorList>
    </citation>
    <scope>STRUCTURE BY ELECTRON MICROSCOPY (9.50 ANGSTROMS) IN COMPLEX WITH DOM34</scope>
    <scope>IDENTIFICATION IN THE DOM34-HBS1 COMPLEX</scope>
</reference>
<reference evidence="18" key="15">
    <citation type="journal article" date="2016" name="Nat. Commun.">
        <title>Structural insights into ribosomal rescue by Dom34 and Hbs1 at near-atomic resolution.</title>
        <authorList>
            <person name="Hilal T."/>
            <person name="Yamamoto H."/>
            <person name="Loerke J."/>
            <person name="Buerger J."/>
            <person name="Mielke T."/>
            <person name="Spahn C.M."/>
        </authorList>
    </citation>
    <scope>STRUCTURE BY ELECTRON MICROSCOPY (3.30 ANGSTROMS) IN COMPLEX WITH DOM34 AND RIBOSOME</scope>
    <scope>IDENTIFICATION IN THE DOM34-HBS1 COMPLEX</scope>
</reference>
<sequence>MAYSDYSDGADDMPDFHDEGEFDDYLNDDEYDLMNEVFPTLKAQLQDYQGWDNLSLKLALFDNNFDLESTLAELKKTLKKKKTPKKPIAAANGSANVTQKLANISISQQRPNDRLPDWLDEEESEGERNGEEANDEKTVQRYYKTTVPTKPKKPHDISAFVKSALPHLSFVVLGHVDAGKSTLMGRLLYDLNIVNQSQLRKLQRESETMGKSSFKFAWIMDQTNEERERGVTVSICTSHFSTHRANFTIVDAPGHRDFVPNAIMGISQADMAILCVDCSTNAFESGFDLDGQTKEHMLLASSLGIHNLIIAMNKMDNVDWSQQRFEEIKSKLLPYLVDIGFFEDNINWVPISGFSGEGVYKIEYTDEVRQWYNGPNLMSTLENAAFKISKENEGINKDDPFLFSVLEIIPSKKTSNDLALVSGKLESGSIQPGESLTIYPSEQSCIVDKIQVGSQQGQSTNHEETDVAIKGDFVTLKLRKAYPEDIQNGDLAASVDYSSIHSAQCFVLELTTFDMNRPLLPGTPFILFIGVKEQPARIKRLISFIDKGNTASKKKIRHLGSKQRAFVEIELIEVKRWIPLLTAHENDRLGRVVLRKDGRTIAAGKISEITQ</sequence>
<keyword id="KW-0002">3D-structure</keyword>
<keyword id="KW-0963">Cytoplasm</keyword>
<keyword id="KW-0251">Elongation factor</keyword>
<keyword id="KW-0342">GTP-binding</keyword>
<keyword id="KW-0378">Hydrolase</keyword>
<keyword id="KW-0547">Nucleotide-binding</keyword>
<keyword id="KW-0597">Phosphoprotein</keyword>
<keyword id="KW-0648">Protein biosynthesis</keyword>
<keyword id="KW-1185">Reference proteome</keyword>
<keyword id="KW-0810">Translation regulation</keyword>
<gene>
    <name evidence="11 14" type="primary">HBS1</name>
    <name type="ordered locus">YKR084C</name>
    <name type="ORF">YKR404</name>
</gene>
<comment type="function">
    <text evidence="6 7 8">GTPase component of the Dom34-Hbs1 complex, a complex that recognizes stalled ribosomes and triggers the No-Go Decay (NGD) pathway (PubMed:16554824, PubMed:20947765, PubMed:21102444). The Dom34-Hbs1 complex recognizes ribosomes stalled at the 3' end of an mRNA and engages stalled ribosomes by destabilizing mRNA in the mRNA channel (PubMed:16554824, PubMed:20947765). Following ribosome-binding, the Pelota-HBS1L complex promotes the disassembly of stalled ribosomes, followed by degradation of damaged mRNAs as part of the NGD pathway (PubMed:16554824, PubMed:20947765). The Dom34-Hbs1 complex is also involved in non-functional rRNA decay (PubMed:21102444).</text>
</comment>
<comment type="catalytic activity">
    <reaction evidence="7">
        <text>GTP + H2O = GDP + phosphate + H(+)</text>
        <dbReference type="Rhea" id="RHEA:19669"/>
        <dbReference type="ChEBI" id="CHEBI:15377"/>
        <dbReference type="ChEBI" id="CHEBI:15378"/>
        <dbReference type="ChEBI" id="CHEBI:37565"/>
        <dbReference type="ChEBI" id="CHEBI:43474"/>
        <dbReference type="ChEBI" id="CHEBI:58189"/>
    </reaction>
    <physiologicalReaction direction="left-to-right" evidence="7">
        <dbReference type="Rhea" id="RHEA:19670"/>
    </physiologicalReaction>
</comment>
<comment type="subunit">
    <text evidence="3 7 8 9 10">Component of the Dom34-Hbs1 complex, also named Pelota-HBS1L complex, composed of DOM34 and HBS1.</text>
</comment>
<comment type="interaction">
    <interactant intactId="EBI-8194">
        <id>P32769</id>
    </interactant>
    <interactant intactId="EBI-6012">
        <id>P33309</id>
        <label>DOM34</label>
    </interactant>
    <organismsDiffer>false</organismsDiffer>
    <experiments>8</experiments>
</comment>
<comment type="subcellular location">
    <subcellularLocation>
        <location evidence="4">Cytoplasm</location>
    </subcellularLocation>
</comment>
<comment type="miscellaneous">
    <text evidence="5">Present with 2750 molecules/cell in log phase SD medium.</text>
</comment>
<comment type="similarity">
    <text evidence="1">Belongs to the TRAFAC class translation factor GTPase superfamily. Classic translation factor GTPase family.</text>
</comment>
<proteinExistence type="evidence at protein level"/>
<protein>
    <recommendedName>
        <fullName evidence="12">Elongation factor 1 alpha-like protein</fullName>
        <ecNumber evidence="7">3.6.5.-</ecNumber>
    </recommendedName>
</protein>
<organism>
    <name type="scientific">Saccharomyces cerevisiae (strain ATCC 204508 / S288c)</name>
    <name type="common">Baker's yeast</name>
    <dbReference type="NCBI Taxonomy" id="559292"/>
    <lineage>
        <taxon>Eukaryota</taxon>
        <taxon>Fungi</taxon>
        <taxon>Dikarya</taxon>
        <taxon>Ascomycota</taxon>
        <taxon>Saccharomycotina</taxon>
        <taxon>Saccharomycetes</taxon>
        <taxon>Saccharomycetales</taxon>
        <taxon>Saccharomycetaceae</taxon>
        <taxon>Saccharomyces</taxon>
    </lineage>
</organism>
<evidence type="ECO:0000255" key="1">
    <source>
        <dbReference type="PROSITE-ProRule" id="PRU01059"/>
    </source>
</evidence>
<evidence type="ECO:0000256" key="2">
    <source>
        <dbReference type="SAM" id="MobiDB-lite"/>
    </source>
</evidence>
<evidence type="ECO:0000269" key="3">
    <source>
    </source>
</evidence>
<evidence type="ECO:0000269" key="4">
    <source>
    </source>
</evidence>
<evidence type="ECO:0000269" key="5">
    <source>
    </source>
</evidence>
<evidence type="ECO:0000269" key="6">
    <source>
    </source>
</evidence>
<evidence type="ECO:0000269" key="7">
    <source>
    </source>
</evidence>
<evidence type="ECO:0000269" key="8">
    <source>
    </source>
</evidence>
<evidence type="ECO:0000269" key="9">
    <source>
    </source>
</evidence>
<evidence type="ECO:0000269" key="10">
    <source>
    </source>
</evidence>
<evidence type="ECO:0000303" key="11">
    <source>
    </source>
</evidence>
<evidence type="ECO:0000305" key="12"/>
<evidence type="ECO:0000305" key="13">
    <source>
    </source>
</evidence>
<evidence type="ECO:0000312" key="14">
    <source>
        <dbReference type="SGD" id="S000001792"/>
    </source>
</evidence>
<evidence type="ECO:0007744" key="15">
    <source>
        <dbReference type="PDB" id="3IZQ"/>
    </source>
</evidence>
<evidence type="ECO:0007744" key="16">
    <source>
        <dbReference type="PDB" id="3P26"/>
    </source>
</evidence>
<evidence type="ECO:0007744" key="17">
    <source>
        <dbReference type="PDB" id="3P27"/>
    </source>
</evidence>
<evidence type="ECO:0007744" key="18">
    <source>
        <dbReference type="PDB" id="5M1J"/>
    </source>
</evidence>
<evidence type="ECO:0007744" key="19">
    <source>
    </source>
</evidence>
<evidence type="ECO:0007744" key="20">
    <source>
    </source>
</evidence>
<evidence type="ECO:0007744" key="21">
    <source>
    </source>
</evidence>
<evidence type="ECO:0007829" key="22">
    <source>
        <dbReference type="PDB" id="3P26"/>
    </source>
</evidence>
<evidence type="ECO:0007829" key="23">
    <source>
        <dbReference type="PDB" id="3P27"/>
    </source>
</evidence>
<dbReference type="EC" id="3.6.5.-" evidence="7"/>
<dbReference type="EMBL" id="M98437">
    <property type="status" value="NOT_ANNOTATED_CDS"/>
    <property type="molecule type" value="Genomic_DNA"/>
</dbReference>
<dbReference type="EMBL" id="Z27116">
    <property type="protein sequence ID" value="CAA81635.1"/>
    <property type="molecule type" value="Genomic_DNA"/>
</dbReference>
<dbReference type="EMBL" id="Z28309">
    <property type="protein sequence ID" value="CAA82163.1"/>
    <property type="molecule type" value="Genomic_DNA"/>
</dbReference>
<dbReference type="EMBL" id="BK006944">
    <property type="protein sequence ID" value="DAA09234.1"/>
    <property type="molecule type" value="Genomic_DNA"/>
</dbReference>
<dbReference type="PIR" id="S38162">
    <property type="entry name" value="S38162"/>
</dbReference>
<dbReference type="RefSeq" id="NP_013010.3">
    <property type="nucleotide sequence ID" value="NM_001179874.3"/>
</dbReference>
<dbReference type="PDB" id="3IZQ">
    <property type="method" value="EM"/>
    <property type="chains" value="1=1-611"/>
</dbReference>
<dbReference type="PDB" id="3P26">
    <property type="method" value="X-ray"/>
    <property type="resolution" value="2.50 A"/>
    <property type="chains" value="A/B=135-611"/>
</dbReference>
<dbReference type="PDB" id="3P27">
    <property type="method" value="X-ray"/>
    <property type="resolution" value="2.95 A"/>
    <property type="chains" value="A/B=135-611"/>
</dbReference>
<dbReference type="PDB" id="5M1J">
    <property type="method" value="EM"/>
    <property type="resolution" value="3.30 A"/>
    <property type="chains" value="A6=1-611"/>
</dbReference>
<dbReference type="PDBsum" id="3IZQ"/>
<dbReference type="PDBsum" id="3P26"/>
<dbReference type="PDBsum" id="3P27"/>
<dbReference type="PDBsum" id="5M1J"/>
<dbReference type="EMDB" id="EMD-4140"/>
<dbReference type="SMR" id="P32769"/>
<dbReference type="BioGRID" id="34215">
    <property type="interactions" value="160"/>
</dbReference>
<dbReference type="ComplexPortal" id="CPX-465">
    <property type="entry name" value="DOM34-HBS1 ribosome dissociation complex"/>
</dbReference>
<dbReference type="DIP" id="DIP-762N"/>
<dbReference type="FunCoup" id="P32769">
    <property type="interactions" value="93"/>
</dbReference>
<dbReference type="IntAct" id="P32769">
    <property type="interactions" value="2"/>
</dbReference>
<dbReference type="STRING" id="4932.YKR084C"/>
<dbReference type="iPTMnet" id="P32769"/>
<dbReference type="PaxDb" id="4932-YKR084C"/>
<dbReference type="PeptideAtlas" id="P32769"/>
<dbReference type="EnsemblFungi" id="YKR084C_mRNA">
    <property type="protein sequence ID" value="YKR084C"/>
    <property type="gene ID" value="YKR084C"/>
</dbReference>
<dbReference type="GeneID" id="853959"/>
<dbReference type="KEGG" id="sce:YKR084C"/>
<dbReference type="AGR" id="SGD:S000001792"/>
<dbReference type="SGD" id="S000001792">
    <property type="gene designation" value="HBS1"/>
</dbReference>
<dbReference type="VEuPathDB" id="FungiDB:YKR084C"/>
<dbReference type="eggNOG" id="KOG0458">
    <property type="taxonomic scope" value="Eukaryota"/>
</dbReference>
<dbReference type="GeneTree" id="ENSGT00940000156274"/>
<dbReference type="HOGENOM" id="CLU_007265_3_8_1"/>
<dbReference type="InParanoid" id="P32769"/>
<dbReference type="OMA" id="DYQGWDN"/>
<dbReference type="OrthoDB" id="342024at2759"/>
<dbReference type="BioCyc" id="YEAST:G3O-32047-MONOMER"/>
<dbReference type="Reactome" id="R-SCE-156842">
    <property type="pathway name" value="Eukaryotic Translation Elongation"/>
</dbReference>
<dbReference type="Reactome" id="R-SCE-3371511">
    <property type="pathway name" value="HSF1 activation"/>
</dbReference>
<dbReference type="Reactome" id="R-SCE-6798695">
    <property type="pathway name" value="Neutrophil degranulation"/>
</dbReference>
<dbReference type="Reactome" id="R-SCE-8876725">
    <property type="pathway name" value="Protein methylation"/>
</dbReference>
<dbReference type="BioGRID-ORCS" id="853959">
    <property type="hits" value="0 hits in 10 CRISPR screens"/>
</dbReference>
<dbReference type="EvolutionaryTrace" id="P32769"/>
<dbReference type="PRO" id="PR:P32769"/>
<dbReference type="Proteomes" id="UP000002311">
    <property type="component" value="Chromosome XI"/>
</dbReference>
<dbReference type="RNAct" id="P32769">
    <property type="molecule type" value="protein"/>
</dbReference>
<dbReference type="GO" id="GO:0005737">
    <property type="term" value="C:cytoplasm"/>
    <property type="evidence" value="ECO:0007005"/>
    <property type="project" value="SGD"/>
</dbReference>
<dbReference type="GO" id="GO:0005829">
    <property type="term" value="C:cytosol"/>
    <property type="evidence" value="ECO:0007005"/>
    <property type="project" value="SGD"/>
</dbReference>
<dbReference type="GO" id="GO:1990533">
    <property type="term" value="C:Dom34-Hbs1 complex"/>
    <property type="evidence" value="ECO:0000314"/>
    <property type="project" value="UniProtKB"/>
</dbReference>
<dbReference type="GO" id="GO:0005525">
    <property type="term" value="F:GTP binding"/>
    <property type="evidence" value="ECO:0007669"/>
    <property type="project" value="UniProtKB-KW"/>
</dbReference>
<dbReference type="GO" id="GO:0003924">
    <property type="term" value="F:GTPase activity"/>
    <property type="evidence" value="ECO:0000314"/>
    <property type="project" value="SGD"/>
</dbReference>
<dbReference type="GO" id="GO:0003746">
    <property type="term" value="F:translation elongation factor activity"/>
    <property type="evidence" value="ECO:0007669"/>
    <property type="project" value="UniProtKB-KW"/>
</dbReference>
<dbReference type="GO" id="GO:0070651">
    <property type="term" value="P:nonfunctional rRNA decay"/>
    <property type="evidence" value="ECO:0000314"/>
    <property type="project" value="UniProtKB"/>
</dbReference>
<dbReference type="GO" id="GO:0070966">
    <property type="term" value="P:nuclear-transcribed mRNA catabolic process, no-go decay"/>
    <property type="evidence" value="ECO:0000314"/>
    <property type="project" value="UniProtKB"/>
</dbReference>
<dbReference type="GO" id="GO:0045727">
    <property type="term" value="P:positive regulation of translation"/>
    <property type="evidence" value="ECO:0000315"/>
    <property type="project" value="SGD"/>
</dbReference>
<dbReference type="GO" id="GO:0045948">
    <property type="term" value="P:positive regulation of translational initiation"/>
    <property type="evidence" value="ECO:0000314"/>
    <property type="project" value="ComplexPortal"/>
</dbReference>
<dbReference type="GO" id="GO:0072344">
    <property type="term" value="P:rescue of stalled ribosome"/>
    <property type="evidence" value="ECO:0000314"/>
    <property type="project" value="ComplexPortal"/>
</dbReference>
<dbReference type="GO" id="GO:0032790">
    <property type="term" value="P:ribosome disassembly"/>
    <property type="evidence" value="ECO:0000314"/>
    <property type="project" value="ComplexPortal"/>
</dbReference>
<dbReference type="GO" id="GO:0006412">
    <property type="term" value="P:translation"/>
    <property type="evidence" value="ECO:0000318"/>
    <property type="project" value="GO_Central"/>
</dbReference>
<dbReference type="CDD" id="cd01883">
    <property type="entry name" value="EF1_alpha"/>
    <property type="match status" value="1"/>
</dbReference>
<dbReference type="CDD" id="cd04093">
    <property type="entry name" value="HBS1_C_III"/>
    <property type="match status" value="1"/>
</dbReference>
<dbReference type="FunFam" id="2.40.30.10:FF:000165">
    <property type="entry name" value="Elongation factor 1 alpha-like protein"/>
    <property type="match status" value="1"/>
</dbReference>
<dbReference type="FunFam" id="2.40.30.10:FF:000070">
    <property type="entry name" value="Translation elongation factor EF-1 subunit"/>
    <property type="match status" value="1"/>
</dbReference>
<dbReference type="FunFam" id="3.40.50.300:FF:000204">
    <property type="entry name" value="Translation elongation factor Tu"/>
    <property type="match status" value="1"/>
</dbReference>
<dbReference type="Gene3D" id="3.40.50.300">
    <property type="entry name" value="P-loop containing nucleotide triphosphate hydrolases"/>
    <property type="match status" value="1"/>
</dbReference>
<dbReference type="Gene3D" id="2.40.30.10">
    <property type="entry name" value="Translation factors"/>
    <property type="match status" value="2"/>
</dbReference>
<dbReference type="InterPro" id="IPR031157">
    <property type="entry name" value="G_TR_CS"/>
</dbReference>
<dbReference type="InterPro" id="IPR054696">
    <property type="entry name" value="GTP-eEF1A_C"/>
</dbReference>
<dbReference type="InterPro" id="IPR015033">
    <property type="entry name" value="HBS1-like_N"/>
</dbReference>
<dbReference type="InterPro" id="IPR027417">
    <property type="entry name" value="P-loop_NTPase"/>
</dbReference>
<dbReference type="InterPro" id="IPR000795">
    <property type="entry name" value="T_Tr_GTP-bd_dom"/>
</dbReference>
<dbReference type="InterPro" id="IPR050100">
    <property type="entry name" value="TRAFAC_GTPase_members"/>
</dbReference>
<dbReference type="InterPro" id="IPR009000">
    <property type="entry name" value="Transl_B-barrel_sf"/>
</dbReference>
<dbReference type="InterPro" id="IPR009001">
    <property type="entry name" value="Transl_elong_EF1A/Init_IF2_C"/>
</dbReference>
<dbReference type="PANTHER" id="PTHR23115">
    <property type="entry name" value="TRANSLATION FACTOR"/>
    <property type="match status" value="1"/>
</dbReference>
<dbReference type="Pfam" id="PF22594">
    <property type="entry name" value="GTP-eEF1A_C"/>
    <property type="match status" value="1"/>
</dbReference>
<dbReference type="Pfam" id="PF00009">
    <property type="entry name" value="GTP_EFTU"/>
    <property type="match status" value="1"/>
</dbReference>
<dbReference type="Pfam" id="PF08938">
    <property type="entry name" value="HBS1_N"/>
    <property type="match status" value="1"/>
</dbReference>
<dbReference type="PRINTS" id="PR00315">
    <property type="entry name" value="ELONGATNFCT"/>
</dbReference>
<dbReference type="SUPFAM" id="SSF50465">
    <property type="entry name" value="EF-Tu/eEF-1alpha/eIF2-gamma C-terminal domain"/>
    <property type="match status" value="1"/>
</dbReference>
<dbReference type="SUPFAM" id="SSF52540">
    <property type="entry name" value="P-loop containing nucleoside triphosphate hydrolases"/>
    <property type="match status" value="1"/>
</dbReference>
<dbReference type="SUPFAM" id="SSF50447">
    <property type="entry name" value="Translation proteins"/>
    <property type="match status" value="1"/>
</dbReference>
<dbReference type="PROSITE" id="PS00301">
    <property type="entry name" value="G_TR_1"/>
    <property type="match status" value="1"/>
</dbReference>
<dbReference type="PROSITE" id="PS51722">
    <property type="entry name" value="G_TR_2"/>
    <property type="match status" value="1"/>
</dbReference>
<feature type="chain" id="PRO_0000091490" description="Elongation factor 1 alpha-like protein">
    <location>
        <begin position="1"/>
        <end position="611"/>
    </location>
</feature>
<feature type="domain" description="tr-type G" evidence="1">
    <location>
        <begin position="165"/>
        <end position="390"/>
    </location>
</feature>
<feature type="region of interest" description="Disordered" evidence="2">
    <location>
        <begin position="1"/>
        <end position="21"/>
    </location>
</feature>
<feature type="region of interest" description="Disordered" evidence="2">
    <location>
        <begin position="105"/>
        <end position="138"/>
    </location>
</feature>
<feature type="region of interest" description="G1" evidence="1">
    <location>
        <begin position="174"/>
        <end position="181"/>
    </location>
</feature>
<feature type="region of interest" description="G2" evidence="1">
    <location>
        <begin position="230"/>
        <end position="234"/>
    </location>
</feature>
<feature type="region of interest" description="G3" evidence="1">
    <location>
        <begin position="251"/>
        <end position="254"/>
    </location>
</feature>
<feature type="region of interest" description="G4" evidence="1">
    <location>
        <begin position="313"/>
        <end position="316"/>
    </location>
</feature>
<feature type="region of interest" description="G5" evidence="1">
    <location>
        <begin position="352"/>
        <end position="354"/>
    </location>
</feature>
<feature type="compositionally biased region" description="Basic and acidic residues" evidence="2">
    <location>
        <begin position="126"/>
        <end position="138"/>
    </location>
</feature>
<feature type="binding site" evidence="13 17">
    <location>
        <begin position="174"/>
        <end position="181"/>
    </location>
    <ligand>
        <name>GTP</name>
        <dbReference type="ChEBI" id="CHEBI:37565"/>
    </ligand>
</feature>
<feature type="binding site" evidence="13 17">
    <location>
        <begin position="313"/>
        <end position="316"/>
    </location>
    <ligand>
        <name>GTP</name>
        <dbReference type="ChEBI" id="CHEBI:37565"/>
    </ligand>
</feature>
<feature type="binding site" evidence="13 17">
    <location>
        <begin position="352"/>
        <end position="354"/>
    </location>
    <ligand>
        <name>GTP</name>
        <dbReference type="ChEBI" id="CHEBI:37565"/>
    </ligand>
</feature>
<feature type="modified residue" description="Phosphoserine" evidence="19 20 21">
    <location>
        <position position="124"/>
    </location>
</feature>
<feature type="mutagenesis site" description="Loss of function. Abolished GTP-binding and ability to trigger the No-Go Decay (NGD) pathway and promote degradation of non-functional rRNAs." evidence="3 8">
    <original>V</original>
    <variation>G</variation>
    <location>
        <position position="176"/>
    </location>
</feature>
<feature type="mutagenesis site" description="Abolished GTP-binding and ability to trigger the No-Go Decay (NGD) pathway and promote degradation of non-functional rRNAs." evidence="8">
    <original>K</original>
    <variation>A</variation>
    <location>
        <position position="180"/>
    </location>
</feature>
<feature type="mutagenesis site" description="Loss of function. Abolished GTP-binding and ability to trigger the No-Go Decay (NGD) pathway and promote degradation of non-functional rRNAs." evidence="3 8">
    <original>H</original>
    <variation>E</variation>
    <location>
        <position position="255"/>
    </location>
</feature>
<feature type="mutagenesis site" description="Abolished ability to trigger the No-Go Decay (NGD) pathway, without affecting the ability to promote degradation of non-functional rRNAs." evidence="8">
    <original>R</original>
    <variation>E</variation>
    <location>
        <position position="517"/>
    </location>
</feature>
<feature type="mutagenesis site" description="Abolished ability to trigger the No-Go Decay (NGD) pathway, without affecting the ability to promote degradation of non-functional rRNAs." evidence="8">
    <original>L</original>
    <variation>R</variation>
    <location>
        <position position="520"/>
    </location>
</feature>
<feature type="mutagenesis site" description="Abolished ability to trigger the No-Go Decay (NGD) pathway, without affecting the ability to promote degradation of non-functional rRNAs." evidence="8">
    <original>RH</original>
    <variation>AA</variation>
    <location>
        <begin position="557"/>
        <end position="558"/>
    </location>
</feature>
<feature type="sequence conflict" description="In Ref. 4; M98437." evidence="12" ref="4">
    <original>NGS</original>
    <variation>MGV</variation>
    <location>
        <begin position="92"/>
        <end position="94"/>
    </location>
</feature>
<feature type="helix" evidence="22">
    <location>
        <begin position="157"/>
        <end position="163"/>
    </location>
</feature>
<feature type="strand" evidence="22">
    <location>
        <begin position="167"/>
        <end position="174"/>
    </location>
</feature>
<feature type="helix" evidence="22">
    <location>
        <begin position="176"/>
        <end position="178"/>
    </location>
</feature>
<feature type="helix" evidence="22">
    <location>
        <begin position="180"/>
        <end position="190"/>
    </location>
</feature>
<feature type="helix" evidence="22">
    <location>
        <begin position="196"/>
        <end position="202"/>
    </location>
</feature>
<feature type="helix" evidence="23">
    <location>
        <begin position="219"/>
        <end position="222"/>
    </location>
</feature>
<feature type="strand" evidence="22">
    <location>
        <begin position="237"/>
        <end position="241"/>
    </location>
</feature>
<feature type="strand" evidence="22">
    <location>
        <begin position="246"/>
        <end position="250"/>
    </location>
</feature>
<feature type="helix" evidence="22">
    <location>
        <begin position="256"/>
        <end position="258"/>
    </location>
</feature>
<feature type="helix" evidence="22">
    <location>
        <begin position="259"/>
        <end position="266"/>
    </location>
</feature>
<feature type="strand" evidence="22">
    <location>
        <begin position="270"/>
        <end position="277"/>
    </location>
</feature>
<feature type="helix" evidence="22">
    <location>
        <begin position="291"/>
        <end position="302"/>
    </location>
</feature>
<feature type="strand" evidence="22">
    <location>
        <begin position="308"/>
        <end position="313"/>
    </location>
</feature>
<feature type="helix" evidence="22">
    <location>
        <begin position="315"/>
        <end position="318"/>
    </location>
</feature>
<feature type="helix" evidence="22">
    <location>
        <begin position="322"/>
        <end position="339"/>
    </location>
</feature>
<feature type="helix" evidence="22">
    <location>
        <begin position="343"/>
        <end position="345"/>
    </location>
</feature>
<feature type="strand" evidence="22">
    <location>
        <begin position="346"/>
        <end position="350"/>
    </location>
</feature>
<feature type="strand" evidence="22">
    <location>
        <begin position="353"/>
        <end position="355"/>
    </location>
</feature>
<feature type="strand" evidence="22">
    <location>
        <begin position="359"/>
        <end position="362"/>
    </location>
</feature>
<feature type="helix" evidence="22">
    <location>
        <begin position="366"/>
        <end position="371"/>
    </location>
</feature>
<feature type="helix" evidence="22">
    <location>
        <begin position="377"/>
        <end position="392"/>
    </location>
</feature>
<feature type="strand" evidence="22">
    <location>
        <begin position="397"/>
        <end position="399"/>
    </location>
</feature>
<feature type="strand" evidence="22">
    <location>
        <begin position="402"/>
        <end position="409"/>
    </location>
</feature>
<feature type="strand" evidence="22">
    <location>
        <begin position="419"/>
        <end position="430"/>
    </location>
</feature>
<feature type="strand" evidence="22">
    <location>
        <begin position="435"/>
        <end position="439"/>
    </location>
</feature>
<feature type="turn" evidence="22">
    <location>
        <begin position="440"/>
        <end position="442"/>
    </location>
</feature>
<feature type="strand" evidence="22">
    <location>
        <begin position="443"/>
        <end position="452"/>
    </location>
</feature>
<feature type="turn" evidence="22">
    <location>
        <begin position="453"/>
        <end position="455"/>
    </location>
</feature>
<feature type="strand" evidence="22">
    <location>
        <begin position="464"/>
        <end position="466"/>
    </location>
</feature>
<feature type="strand" evidence="22">
    <location>
        <begin position="473"/>
        <end position="480"/>
    </location>
</feature>
<feature type="helix" evidence="22">
    <location>
        <begin position="483"/>
        <end position="485"/>
    </location>
</feature>
<feature type="strand" evidence="22">
    <location>
        <begin position="491"/>
        <end position="493"/>
    </location>
</feature>
<feature type="strand" evidence="22">
    <location>
        <begin position="504"/>
        <end position="512"/>
    </location>
</feature>
<feature type="strand" evidence="22">
    <location>
        <begin position="524"/>
        <end position="529"/>
    </location>
</feature>
<feature type="strand" evidence="22">
    <location>
        <begin position="532"/>
        <end position="547"/>
    </location>
</feature>
<feature type="strand" evidence="22">
    <location>
        <begin position="564"/>
        <end position="571"/>
    </location>
</feature>
<feature type="turn" evidence="22">
    <location>
        <begin position="583"/>
        <end position="585"/>
    </location>
</feature>
<feature type="turn" evidence="22">
    <location>
        <begin position="587"/>
        <end position="590"/>
    </location>
</feature>
<feature type="strand" evidence="22">
    <location>
        <begin position="591"/>
        <end position="596"/>
    </location>
</feature>
<feature type="strand" evidence="22">
    <location>
        <begin position="599"/>
        <end position="609"/>
    </location>
</feature>